<accession>C0HM90</accession>
<sequence length="1008" mass="91078">SPAMPVPGPMGPMGPRGPPGSPGASGPQGFGPAGPPGKNGEDGESGKPGRGGERGPPGPQGARGFSGLDGAKGDSGPAGPKGESGAPGENGTPGAMGPRGAAGAAGARGNDGAAGAAGPPGPTGPAGPPGFPGGPGAKGDAGAQGGRGPEGPAGARGEPGNPGPAGAAGPSGNPGTDGAAGPKGTPGAAGVAGAPGFPGPRGPSGPQGAAGAPGPKGEAGAKGEAGAPGVQGPPGPSGEEGKRGARGEPGAAGARGGPGGRGFPGTDGPAGPKGATGERGAPGAVGPKGATGEPGRTGEPGLPGAKGMTGSPGSPGPDGKTGPAGPSGQDGRPGPPGPVGARGQPGVMGFPGPKGAAGEGGKPGERGPSGPAGPAGERGEQGPAGAPGFQGLPGPQGALGETGKPGEQGLPGEAGATGPAGARGDRGFPGERGAKGDAGAPGAPGAQGPPGLQGMPGERGAAGLPGLRGDRGDQGAKGADGAPGKDGPRGLTGPLGLPGPAGATGDKGESGPAGAVGPAGARGAPGERGESGPPGPAGFAGPPGADGQPGAKGEAGDNGAKGDAGPPGAAGPTGAPGPQGPVGNTGAKGARATGFPGAAGRVGPPGPSGNPGPPGPAGGPGKEGPKGNRGETGPAGRPGELGAAGPPGPAGEKGSPGSEGATGSAGLPGPQGLAGQRGLPGQRGERGFPGLPGPSGEAGGPSGPGGERGPPGPMGPPGLAGAPGEPGREGSPGNEGSAGRDGAAGPKGDRGESGPSGAPGAPGPPGAPGPVGPAGKNGDRGETGPAGPAGSAGPSGPRGPAGAPGLRGDKGESGEAGERRGFTGMQGPPGPSGSSGEQGPAGAAGPAGPRGPAGSAGSPGKDGMSGLPGPTGPPGPRSGEMGPAGPPGPPGPPGAPGAPGGGFDLGFLSQPQEKAPDPFRDRDLEVDSTLKSLSQQLEQLRSPDGTRSKPEDVNLQLTFLRNSVAYMDASAGNLKKATSRLPLLDLAPMDVGAPDQEFGLEVGPVCFL</sequence>
<feature type="chain" id="PRO_0000459604" description="Collagen, type I, alpha 1a">
    <location>
        <begin position="1"/>
        <end position="1008"/>
    </location>
</feature>
<feature type="domain" description="Fibrillar collagen NC1" evidence="1">
    <location>
        <begin position="978"/>
        <end position="1008"/>
    </location>
</feature>
<feature type="region of interest" description="Disordered" evidence="2">
    <location>
        <begin position="1"/>
        <end position="920"/>
    </location>
</feature>
<feature type="compositionally biased region" description="Pro residues" evidence="2">
    <location>
        <begin position="1"/>
        <end position="21"/>
    </location>
</feature>
<feature type="compositionally biased region" description="Basic and acidic residues" evidence="2">
    <location>
        <begin position="39"/>
        <end position="53"/>
    </location>
</feature>
<feature type="compositionally biased region" description="Low complexity" evidence="2">
    <location>
        <begin position="92"/>
        <end position="117"/>
    </location>
</feature>
<feature type="compositionally biased region" description="Pro residues" evidence="2">
    <location>
        <begin position="119"/>
        <end position="132"/>
    </location>
</feature>
<feature type="compositionally biased region" description="Gly residues" evidence="2">
    <location>
        <begin position="133"/>
        <end position="151"/>
    </location>
</feature>
<feature type="compositionally biased region" description="Low complexity" evidence="2">
    <location>
        <begin position="152"/>
        <end position="195"/>
    </location>
</feature>
<feature type="compositionally biased region" description="Low complexity" evidence="2">
    <location>
        <begin position="204"/>
        <end position="230"/>
    </location>
</feature>
<feature type="compositionally biased region" description="Gly residues" evidence="2">
    <location>
        <begin position="253"/>
        <end position="265"/>
    </location>
</feature>
<feature type="compositionally biased region" description="Low complexity" evidence="2">
    <location>
        <begin position="339"/>
        <end position="354"/>
    </location>
</feature>
<feature type="compositionally biased region" description="Low complexity" evidence="2">
    <location>
        <begin position="410"/>
        <end position="422"/>
    </location>
</feature>
<feature type="compositionally biased region" description="Basic and acidic residues" evidence="2">
    <location>
        <begin position="423"/>
        <end position="435"/>
    </location>
</feature>
<feature type="compositionally biased region" description="Low complexity" evidence="2">
    <location>
        <begin position="437"/>
        <end position="456"/>
    </location>
</feature>
<feature type="compositionally biased region" description="Low complexity" evidence="2">
    <location>
        <begin position="489"/>
        <end position="524"/>
    </location>
</feature>
<feature type="compositionally biased region" description="Low complexity" evidence="2">
    <location>
        <begin position="537"/>
        <end position="573"/>
    </location>
</feature>
<feature type="compositionally biased region" description="Pro residues" evidence="2">
    <location>
        <begin position="604"/>
        <end position="617"/>
    </location>
</feature>
<feature type="compositionally biased region" description="Low complexity" evidence="2">
    <location>
        <begin position="634"/>
        <end position="661"/>
    </location>
</feature>
<feature type="compositionally biased region" description="Gly residues" evidence="2">
    <location>
        <begin position="696"/>
        <end position="709"/>
    </location>
</feature>
<feature type="compositionally biased region" description="Low complexity" evidence="2">
    <location>
        <begin position="717"/>
        <end position="735"/>
    </location>
</feature>
<feature type="compositionally biased region" description="Pro residues" evidence="2">
    <location>
        <begin position="761"/>
        <end position="771"/>
    </location>
</feature>
<feature type="compositionally biased region" description="Low complexity" evidence="2">
    <location>
        <begin position="785"/>
        <end position="806"/>
    </location>
</feature>
<feature type="compositionally biased region" description="Basic and acidic residues" evidence="2">
    <location>
        <begin position="807"/>
        <end position="821"/>
    </location>
</feature>
<feature type="compositionally biased region" description="Low complexity" evidence="2">
    <location>
        <begin position="832"/>
        <end position="868"/>
    </location>
</feature>
<feature type="compositionally biased region" description="Pro residues" evidence="2">
    <location>
        <begin position="884"/>
        <end position="896"/>
    </location>
</feature>
<feature type="non-consecutive residues" evidence="3">
    <location>
        <begin position="30"/>
        <end position="31"/>
    </location>
</feature>
<feature type="non-consecutive residues" evidence="3">
    <location>
        <begin position="63"/>
        <end position="64"/>
    </location>
</feature>
<feature type="non-consecutive residues" evidence="3">
    <location>
        <begin position="99"/>
        <end position="100"/>
    </location>
</feature>
<feature type="non-consecutive residues" evidence="3">
    <location>
        <begin position="216"/>
        <end position="217"/>
    </location>
</feature>
<feature type="non-consecutive residues" evidence="3">
    <location>
        <begin position="255"/>
        <end position="256"/>
    </location>
</feature>
<feature type="non-consecutive residues" evidence="3">
    <location>
        <begin position="366"/>
        <end position="367"/>
    </location>
</feature>
<feature type="non-consecutive residues" evidence="3">
    <location>
        <begin position="432"/>
        <end position="433"/>
    </location>
</feature>
<feature type="non-consecutive residues" evidence="3">
    <location>
        <begin position="591"/>
        <end position="592"/>
    </location>
</feature>
<feature type="non-consecutive residues" evidence="3">
    <location>
        <begin position="677"/>
        <end position="678"/>
    </location>
</feature>
<feature type="non-consecutive residues" evidence="3">
    <location>
        <begin position="699"/>
        <end position="700"/>
    </location>
</feature>
<feature type="non-consecutive residues" evidence="3">
    <location>
        <begin position="819"/>
        <end position="820"/>
    </location>
</feature>
<feature type="non-consecutive residues" evidence="3">
    <location>
        <begin position="877"/>
        <end position="878"/>
    </location>
</feature>
<feature type="non-consecutive residues" evidence="3">
    <location>
        <begin position="920"/>
        <end position="921"/>
    </location>
</feature>
<feature type="non-consecutive residues" evidence="3">
    <location>
        <begin position="947"/>
        <end position="948"/>
    </location>
</feature>
<feature type="non-consecutive residues" evidence="3">
    <location>
        <begin position="961"/>
        <end position="962"/>
    </location>
</feature>
<feature type="non-consecutive residues" evidence="3">
    <location>
        <begin position="977"/>
        <end position="978"/>
    </location>
</feature>
<feature type="non-terminal residue" evidence="3">
    <location>
        <position position="1"/>
    </location>
</feature>
<name>CO1AA_EPIAE</name>
<keyword id="KW-0176">Collagen</keyword>
<keyword id="KW-0903">Direct protein sequencing</keyword>
<keyword id="KW-0272">Extracellular matrix</keyword>
<keyword id="KW-0964">Secreted</keyword>
<reference evidence="4" key="1">
    <citation type="submission" date="2023-05" db="UniProtKB">
        <title>Grouping groupers in the Mediterranean: ecological baselines revealed by ancient proteins.</title>
        <authorList>
            <person name="Winter R.M."/>
            <person name="de Kock W."/>
            <person name="Mackie M."/>
            <person name="Ramsoe M."/>
            <person name="Desidera E."/>
            <person name="Collins M."/>
            <person name="Guidetti P."/>
            <person name="Presslee S."/>
            <person name="Munoz-Alegre M."/>
            <person name="Oueslati T."/>
            <person name="Morales-Muniz A."/>
            <person name="Michailidis D."/>
            <person name="van den Hurk Y."/>
            <person name="Cakirlar C."/>
        </authorList>
    </citation>
    <scope>PROTEIN SEQUENCE</scope>
    <scope>IDENTIFICATION BY MASS SPECTROMETRY</scope>
    <source>
        <tissue evidence="3">Bone</tissue>
    </source>
</reference>
<protein>
    <recommendedName>
        <fullName evidence="4">Collagen, type I, alpha 1a</fullName>
        <shortName evidence="4">col1a1a</shortName>
    </recommendedName>
    <alternativeName>
        <fullName evidence="4">Alpha-1 type I collagen</fullName>
    </alternativeName>
</protein>
<comment type="subcellular location">
    <subcellularLocation>
        <location evidence="1">Secreted</location>
        <location evidence="1">Extracellular space</location>
        <location evidence="1">Extracellular matrix</location>
    </subcellularLocation>
</comment>
<comment type="similarity">
    <text evidence="1">Belongs to the fibrillar collagen family.</text>
</comment>
<proteinExistence type="evidence at protein level"/>
<evidence type="ECO:0000255" key="1">
    <source>
        <dbReference type="PROSITE-ProRule" id="PRU00793"/>
    </source>
</evidence>
<evidence type="ECO:0000256" key="2">
    <source>
        <dbReference type="SAM" id="MobiDB-lite"/>
    </source>
</evidence>
<evidence type="ECO:0000303" key="3">
    <source ref="1"/>
</evidence>
<evidence type="ECO:0000305" key="4"/>
<organism evidence="3">
    <name type="scientific">Epinephelus aeneus</name>
    <name type="common">White grouper</name>
    <name type="synonym">Serranus aeneus</name>
    <dbReference type="NCBI Taxonomy" id="179536"/>
    <lineage>
        <taxon>Eukaryota</taxon>
        <taxon>Metazoa</taxon>
        <taxon>Chordata</taxon>
        <taxon>Craniata</taxon>
        <taxon>Vertebrata</taxon>
        <taxon>Euteleostomi</taxon>
        <taxon>Actinopterygii</taxon>
        <taxon>Neopterygii</taxon>
        <taxon>Teleostei</taxon>
        <taxon>Neoteleostei</taxon>
        <taxon>Acanthomorphata</taxon>
        <taxon>Eupercaria</taxon>
        <taxon>Perciformes</taxon>
        <taxon>Serranoidei</taxon>
        <taxon>Serranidae</taxon>
        <taxon>Epinephelinae</taxon>
        <taxon>Epinephelini</taxon>
        <taxon>Epinephelus</taxon>
    </lineage>
</organism>
<dbReference type="SMR" id="C0HM90"/>
<dbReference type="GO" id="GO:0005581">
    <property type="term" value="C:collagen trimer"/>
    <property type="evidence" value="ECO:0007669"/>
    <property type="project" value="UniProtKB-KW"/>
</dbReference>
<dbReference type="GO" id="GO:0005576">
    <property type="term" value="C:extracellular region"/>
    <property type="evidence" value="ECO:0007669"/>
    <property type="project" value="UniProtKB-KW"/>
</dbReference>
<dbReference type="GO" id="GO:0005201">
    <property type="term" value="F:extracellular matrix structural constituent"/>
    <property type="evidence" value="ECO:0007669"/>
    <property type="project" value="InterPro"/>
</dbReference>
<dbReference type="Gene3D" id="2.60.120.1000">
    <property type="match status" value="1"/>
</dbReference>
<dbReference type="InterPro" id="IPR008160">
    <property type="entry name" value="Collagen"/>
</dbReference>
<dbReference type="InterPro" id="IPR050938">
    <property type="entry name" value="Collagen_Structural_Proteins"/>
</dbReference>
<dbReference type="InterPro" id="IPR000885">
    <property type="entry name" value="Fib_collagen_C"/>
</dbReference>
<dbReference type="PANTHER" id="PTHR37456:SF6">
    <property type="entry name" value="COLLAGEN ALPHA-1(XXIII) CHAIN-LIKE ISOFORM X2"/>
    <property type="match status" value="1"/>
</dbReference>
<dbReference type="PANTHER" id="PTHR37456">
    <property type="entry name" value="SI:CH211-266K2.1"/>
    <property type="match status" value="1"/>
</dbReference>
<dbReference type="Pfam" id="PF01410">
    <property type="entry name" value="COLFI"/>
    <property type="match status" value="1"/>
</dbReference>
<dbReference type="Pfam" id="PF01391">
    <property type="entry name" value="Collagen"/>
    <property type="match status" value="6"/>
</dbReference>
<dbReference type="SMART" id="SM00038">
    <property type="entry name" value="COLFI"/>
    <property type="match status" value="1"/>
</dbReference>